<comment type="function">
    <text evidence="1">Catalyzes the final step of fatty acid oxidation in which acetyl-CoA is released and the CoA ester of a fatty acid two carbons shorter is formed.</text>
</comment>
<comment type="catalytic activity">
    <reaction evidence="1">
        <text>an acyl-CoA + acetyl-CoA = a 3-oxoacyl-CoA + CoA</text>
        <dbReference type="Rhea" id="RHEA:21564"/>
        <dbReference type="ChEBI" id="CHEBI:57287"/>
        <dbReference type="ChEBI" id="CHEBI:57288"/>
        <dbReference type="ChEBI" id="CHEBI:58342"/>
        <dbReference type="ChEBI" id="CHEBI:90726"/>
        <dbReference type="EC" id="2.3.1.16"/>
    </reaction>
</comment>
<comment type="pathway">
    <text evidence="1">Lipid metabolism; fatty acid beta-oxidation.</text>
</comment>
<comment type="subunit">
    <text evidence="1">Heterotetramer of two alpha chains (FadJ) and two beta chains (FadI).</text>
</comment>
<comment type="subcellular location">
    <subcellularLocation>
        <location evidence="1">Cytoplasm</location>
    </subcellularLocation>
</comment>
<comment type="similarity">
    <text evidence="1">Belongs to the thiolase-like superfamily. Thiolase family.</text>
</comment>
<sequence>MSDRQQVTNSRGERIAIVAGLRTPFAKQATAFHGVSALDMGKMVVNELLSRSEIDPQLIEQLVYGQVVQMPAAPNIAREIVLGTGMNVSTDAYSVTRACATSFQSAVNVAESIMTGNIEIGLAGGSDSSSVLPIGVSKKLAHALVDLNKARTFKQKFAIARRLGLKDLMPVPPAVAEYSTGLSMGQTAEQMAKTYNISRADQDALAHRSHTLATETWNSGHLRNEVMTAHIPPYKQFIDRDNNIRENSVLESYAKLRPAFDRKHGTVTAANSTPLTDGASAIILMSEGRAKALGYQPIGYIKSYAFTAIDVWQDMLMGPSYATPLALKRAGMELEDLTLIEMHEAFAAQTLANMQMFGSKKFAEEKLGRNRAIGEIDMSKFNVLGGSLAYGHPFAATGTRLITQVCNELKRRGGGTGLATACAAGGLGAAMILEVE</sequence>
<feature type="chain" id="PRO_1000069510" description="3-ketoacyl-CoA thiolase">
    <location>
        <begin position="1"/>
        <end position="436"/>
    </location>
</feature>
<feature type="active site" description="Acyl-thioester intermediate" evidence="1">
    <location>
        <position position="99"/>
    </location>
</feature>
<feature type="active site" description="Proton acceptor" evidence="1">
    <location>
        <position position="392"/>
    </location>
</feature>
<feature type="active site" description="Proton acceptor" evidence="1">
    <location>
        <position position="422"/>
    </location>
</feature>
<evidence type="ECO:0000255" key="1">
    <source>
        <dbReference type="HAMAP-Rule" id="MF_01618"/>
    </source>
</evidence>
<accession>Q07ZP7</accession>
<name>FADI_SHEFN</name>
<proteinExistence type="inferred from homology"/>
<keyword id="KW-0012">Acyltransferase</keyword>
<keyword id="KW-0963">Cytoplasm</keyword>
<keyword id="KW-0276">Fatty acid metabolism</keyword>
<keyword id="KW-0442">Lipid degradation</keyword>
<keyword id="KW-0443">Lipid metabolism</keyword>
<keyword id="KW-1185">Reference proteome</keyword>
<keyword id="KW-0808">Transferase</keyword>
<reference key="1">
    <citation type="submission" date="2006-08" db="EMBL/GenBank/DDBJ databases">
        <title>Complete sequence of Shewanella frigidimarina NCIMB 400.</title>
        <authorList>
            <consortium name="US DOE Joint Genome Institute"/>
            <person name="Copeland A."/>
            <person name="Lucas S."/>
            <person name="Lapidus A."/>
            <person name="Barry K."/>
            <person name="Detter J.C."/>
            <person name="Glavina del Rio T."/>
            <person name="Hammon N."/>
            <person name="Israni S."/>
            <person name="Dalin E."/>
            <person name="Tice H."/>
            <person name="Pitluck S."/>
            <person name="Fredrickson J.K."/>
            <person name="Kolker E."/>
            <person name="McCuel L.A."/>
            <person name="DiChristina T."/>
            <person name="Nealson K.H."/>
            <person name="Newman D."/>
            <person name="Tiedje J.M."/>
            <person name="Zhou J."/>
            <person name="Romine M.F."/>
            <person name="Culley D.E."/>
            <person name="Serres M."/>
            <person name="Chertkov O."/>
            <person name="Brettin T."/>
            <person name="Bruce D."/>
            <person name="Han C."/>
            <person name="Tapia R."/>
            <person name="Gilna P."/>
            <person name="Schmutz J."/>
            <person name="Larimer F."/>
            <person name="Land M."/>
            <person name="Hauser L."/>
            <person name="Kyrpides N."/>
            <person name="Mikhailova N."/>
            <person name="Richardson P."/>
        </authorList>
    </citation>
    <scope>NUCLEOTIDE SEQUENCE [LARGE SCALE GENOMIC DNA]</scope>
    <source>
        <strain>NCIMB 400</strain>
    </source>
</reference>
<dbReference type="EC" id="2.3.1.16" evidence="1"/>
<dbReference type="EMBL" id="CP000447">
    <property type="protein sequence ID" value="ABI72517.1"/>
    <property type="molecule type" value="Genomic_DNA"/>
</dbReference>
<dbReference type="RefSeq" id="WP_011638126.1">
    <property type="nucleotide sequence ID" value="NC_008345.1"/>
</dbReference>
<dbReference type="SMR" id="Q07ZP7"/>
<dbReference type="STRING" id="318167.Sfri_2677"/>
<dbReference type="KEGG" id="sfr:Sfri_2677"/>
<dbReference type="eggNOG" id="COG0183">
    <property type="taxonomic scope" value="Bacteria"/>
</dbReference>
<dbReference type="HOGENOM" id="CLU_031026_2_0_6"/>
<dbReference type="OrthoDB" id="1402717at2"/>
<dbReference type="UniPathway" id="UPA00659"/>
<dbReference type="Proteomes" id="UP000000684">
    <property type="component" value="Chromosome"/>
</dbReference>
<dbReference type="GO" id="GO:0005829">
    <property type="term" value="C:cytosol"/>
    <property type="evidence" value="ECO:0007669"/>
    <property type="project" value="TreeGrafter"/>
</dbReference>
<dbReference type="GO" id="GO:0003988">
    <property type="term" value="F:acetyl-CoA C-acyltransferase activity"/>
    <property type="evidence" value="ECO:0007669"/>
    <property type="project" value="UniProtKB-UniRule"/>
</dbReference>
<dbReference type="GO" id="GO:0006635">
    <property type="term" value="P:fatty acid beta-oxidation"/>
    <property type="evidence" value="ECO:0007669"/>
    <property type="project" value="UniProtKB-UniRule"/>
</dbReference>
<dbReference type="CDD" id="cd00751">
    <property type="entry name" value="thiolase"/>
    <property type="match status" value="1"/>
</dbReference>
<dbReference type="FunFam" id="3.40.47.10:FF:000011">
    <property type="entry name" value="3-ketoacyl-CoA thiolase"/>
    <property type="match status" value="1"/>
</dbReference>
<dbReference type="Gene3D" id="3.40.47.10">
    <property type="match status" value="1"/>
</dbReference>
<dbReference type="HAMAP" id="MF_01618">
    <property type="entry name" value="FadI"/>
    <property type="match status" value="1"/>
</dbReference>
<dbReference type="InterPro" id="IPR012806">
    <property type="entry name" value="Ac-CoA_C-AcTrfase_FadI"/>
</dbReference>
<dbReference type="InterPro" id="IPR002155">
    <property type="entry name" value="Thiolase"/>
</dbReference>
<dbReference type="InterPro" id="IPR016039">
    <property type="entry name" value="Thiolase-like"/>
</dbReference>
<dbReference type="InterPro" id="IPR020610">
    <property type="entry name" value="Thiolase_AS"/>
</dbReference>
<dbReference type="InterPro" id="IPR020617">
    <property type="entry name" value="Thiolase_C"/>
</dbReference>
<dbReference type="InterPro" id="IPR020613">
    <property type="entry name" value="Thiolase_CS"/>
</dbReference>
<dbReference type="InterPro" id="IPR020616">
    <property type="entry name" value="Thiolase_N"/>
</dbReference>
<dbReference type="NCBIfam" id="TIGR01930">
    <property type="entry name" value="AcCoA-C-Actrans"/>
    <property type="match status" value="1"/>
</dbReference>
<dbReference type="NCBIfam" id="TIGR02446">
    <property type="entry name" value="FadI"/>
    <property type="match status" value="1"/>
</dbReference>
<dbReference type="NCBIfam" id="NF006516">
    <property type="entry name" value="PRK08963.1"/>
    <property type="match status" value="1"/>
</dbReference>
<dbReference type="PANTHER" id="PTHR18919:SF107">
    <property type="entry name" value="ACETYL-COA ACETYLTRANSFERASE, CYTOSOLIC"/>
    <property type="match status" value="1"/>
</dbReference>
<dbReference type="PANTHER" id="PTHR18919">
    <property type="entry name" value="ACETYL-COA C-ACYLTRANSFERASE"/>
    <property type="match status" value="1"/>
</dbReference>
<dbReference type="Pfam" id="PF02803">
    <property type="entry name" value="Thiolase_C"/>
    <property type="match status" value="1"/>
</dbReference>
<dbReference type="Pfam" id="PF00108">
    <property type="entry name" value="Thiolase_N"/>
    <property type="match status" value="1"/>
</dbReference>
<dbReference type="PIRSF" id="PIRSF000429">
    <property type="entry name" value="Ac-CoA_Ac_transf"/>
    <property type="match status" value="1"/>
</dbReference>
<dbReference type="SUPFAM" id="SSF53901">
    <property type="entry name" value="Thiolase-like"/>
    <property type="match status" value="2"/>
</dbReference>
<dbReference type="PROSITE" id="PS00737">
    <property type="entry name" value="THIOLASE_2"/>
    <property type="match status" value="1"/>
</dbReference>
<dbReference type="PROSITE" id="PS00099">
    <property type="entry name" value="THIOLASE_3"/>
    <property type="match status" value="1"/>
</dbReference>
<protein>
    <recommendedName>
        <fullName evidence="1">3-ketoacyl-CoA thiolase</fullName>
        <ecNumber evidence="1">2.3.1.16</ecNumber>
    </recommendedName>
    <alternativeName>
        <fullName evidence="1">ACSs</fullName>
    </alternativeName>
    <alternativeName>
        <fullName evidence="1">Acetyl-CoA acyltransferase</fullName>
    </alternativeName>
    <alternativeName>
        <fullName evidence="1">Acyl-CoA ligase</fullName>
    </alternativeName>
    <alternativeName>
        <fullName evidence="1">Beta-ketothiolase</fullName>
    </alternativeName>
    <alternativeName>
        <fullName evidence="1">Fatty acid oxidation complex subunit beta</fullName>
    </alternativeName>
</protein>
<organism>
    <name type="scientific">Shewanella frigidimarina (strain NCIMB 400)</name>
    <dbReference type="NCBI Taxonomy" id="318167"/>
    <lineage>
        <taxon>Bacteria</taxon>
        <taxon>Pseudomonadati</taxon>
        <taxon>Pseudomonadota</taxon>
        <taxon>Gammaproteobacteria</taxon>
        <taxon>Alteromonadales</taxon>
        <taxon>Shewanellaceae</taxon>
        <taxon>Shewanella</taxon>
    </lineage>
</organism>
<gene>
    <name evidence="1" type="primary">fadI</name>
    <name type="ordered locus">Sfri_2677</name>
</gene>